<reference key="1">
    <citation type="journal article" date="2004" name="Nature">
        <title>Genome sequence of the Brown Norway rat yields insights into mammalian evolution.</title>
        <authorList>
            <person name="Gibbs R.A."/>
            <person name="Weinstock G.M."/>
            <person name="Metzker M.L."/>
            <person name="Muzny D.M."/>
            <person name="Sodergren E.J."/>
            <person name="Scherer S."/>
            <person name="Scott G."/>
            <person name="Steffen D."/>
            <person name="Worley K.C."/>
            <person name="Burch P.E."/>
            <person name="Okwuonu G."/>
            <person name="Hines S."/>
            <person name="Lewis L."/>
            <person name="Deramo C."/>
            <person name="Delgado O."/>
            <person name="Dugan-Rocha S."/>
            <person name="Miner G."/>
            <person name="Morgan M."/>
            <person name="Hawes A."/>
            <person name="Gill R."/>
            <person name="Holt R.A."/>
            <person name="Adams M.D."/>
            <person name="Amanatides P.G."/>
            <person name="Baden-Tillson H."/>
            <person name="Barnstead M."/>
            <person name="Chin S."/>
            <person name="Evans C.A."/>
            <person name="Ferriera S."/>
            <person name="Fosler C."/>
            <person name="Glodek A."/>
            <person name="Gu Z."/>
            <person name="Jennings D."/>
            <person name="Kraft C.L."/>
            <person name="Nguyen T."/>
            <person name="Pfannkoch C.M."/>
            <person name="Sitter C."/>
            <person name="Sutton G.G."/>
            <person name="Venter J.C."/>
            <person name="Woodage T."/>
            <person name="Smith D."/>
            <person name="Lee H.-M."/>
            <person name="Gustafson E."/>
            <person name="Cahill P."/>
            <person name="Kana A."/>
            <person name="Doucette-Stamm L."/>
            <person name="Weinstock K."/>
            <person name="Fechtel K."/>
            <person name="Weiss R.B."/>
            <person name="Dunn D.M."/>
            <person name="Green E.D."/>
            <person name="Blakesley R.W."/>
            <person name="Bouffard G.G."/>
            <person name="De Jong P.J."/>
            <person name="Osoegawa K."/>
            <person name="Zhu B."/>
            <person name="Marra M."/>
            <person name="Schein J."/>
            <person name="Bosdet I."/>
            <person name="Fjell C."/>
            <person name="Jones S."/>
            <person name="Krzywinski M."/>
            <person name="Mathewson C."/>
            <person name="Siddiqui A."/>
            <person name="Wye N."/>
            <person name="McPherson J."/>
            <person name="Zhao S."/>
            <person name="Fraser C.M."/>
            <person name="Shetty J."/>
            <person name="Shatsman S."/>
            <person name="Geer K."/>
            <person name="Chen Y."/>
            <person name="Abramzon S."/>
            <person name="Nierman W.C."/>
            <person name="Havlak P.H."/>
            <person name="Chen R."/>
            <person name="Durbin K.J."/>
            <person name="Egan A."/>
            <person name="Ren Y."/>
            <person name="Song X.-Z."/>
            <person name="Li B."/>
            <person name="Liu Y."/>
            <person name="Qin X."/>
            <person name="Cawley S."/>
            <person name="Cooney A.J."/>
            <person name="D'Souza L.M."/>
            <person name="Martin K."/>
            <person name="Wu J.Q."/>
            <person name="Gonzalez-Garay M.L."/>
            <person name="Jackson A.R."/>
            <person name="Kalafus K.J."/>
            <person name="McLeod M.P."/>
            <person name="Milosavljevic A."/>
            <person name="Virk D."/>
            <person name="Volkov A."/>
            <person name="Wheeler D.A."/>
            <person name="Zhang Z."/>
            <person name="Bailey J.A."/>
            <person name="Eichler E.E."/>
            <person name="Tuzun E."/>
            <person name="Birney E."/>
            <person name="Mongin E."/>
            <person name="Ureta-Vidal A."/>
            <person name="Woodwark C."/>
            <person name="Zdobnov E."/>
            <person name="Bork P."/>
            <person name="Suyama M."/>
            <person name="Torrents D."/>
            <person name="Alexandersson M."/>
            <person name="Trask B.J."/>
            <person name="Young J.M."/>
            <person name="Huang H."/>
            <person name="Wang H."/>
            <person name="Xing H."/>
            <person name="Daniels S."/>
            <person name="Gietzen D."/>
            <person name="Schmidt J."/>
            <person name="Stevens K."/>
            <person name="Vitt U."/>
            <person name="Wingrove J."/>
            <person name="Camara F."/>
            <person name="Mar Alba M."/>
            <person name="Abril J.F."/>
            <person name="Guigo R."/>
            <person name="Smit A."/>
            <person name="Dubchak I."/>
            <person name="Rubin E.M."/>
            <person name="Couronne O."/>
            <person name="Poliakov A."/>
            <person name="Huebner N."/>
            <person name="Ganten D."/>
            <person name="Goesele C."/>
            <person name="Hummel O."/>
            <person name="Kreitler T."/>
            <person name="Lee Y.-A."/>
            <person name="Monti J."/>
            <person name="Schulz H."/>
            <person name="Zimdahl H."/>
            <person name="Himmelbauer H."/>
            <person name="Lehrach H."/>
            <person name="Jacob H.J."/>
            <person name="Bromberg S."/>
            <person name="Gullings-Handley J."/>
            <person name="Jensen-Seaman M.I."/>
            <person name="Kwitek A.E."/>
            <person name="Lazar J."/>
            <person name="Pasko D."/>
            <person name="Tonellato P.J."/>
            <person name="Twigger S."/>
            <person name="Ponting C.P."/>
            <person name="Duarte J.M."/>
            <person name="Rice S."/>
            <person name="Goodstadt L."/>
            <person name="Beatson S.A."/>
            <person name="Emes R.D."/>
            <person name="Winter E.E."/>
            <person name="Webber C."/>
            <person name="Brandt P."/>
            <person name="Nyakatura G."/>
            <person name="Adetobi M."/>
            <person name="Chiaromonte F."/>
            <person name="Elnitski L."/>
            <person name="Eswara P."/>
            <person name="Hardison R.C."/>
            <person name="Hou M."/>
            <person name="Kolbe D."/>
            <person name="Makova K."/>
            <person name="Miller W."/>
            <person name="Nekrutenko A."/>
            <person name="Riemer C."/>
            <person name="Schwartz S."/>
            <person name="Taylor J."/>
            <person name="Yang S."/>
            <person name="Zhang Y."/>
            <person name="Lindpaintner K."/>
            <person name="Andrews T.D."/>
            <person name="Caccamo M."/>
            <person name="Clamp M."/>
            <person name="Clarke L."/>
            <person name="Curwen V."/>
            <person name="Durbin R.M."/>
            <person name="Eyras E."/>
            <person name="Searle S.M."/>
            <person name="Cooper G.M."/>
            <person name="Batzoglou S."/>
            <person name="Brudno M."/>
            <person name="Sidow A."/>
            <person name="Stone E.A."/>
            <person name="Payseur B.A."/>
            <person name="Bourque G."/>
            <person name="Lopez-Otin C."/>
            <person name="Puente X.S."/>
            <person name="Chakrabarti K."/>
            <person name="Chatterji S."/>
            <person name="Dewey C."/>
            <person name="Pachter L."/>
            <person name="Bray N."/>
            <person name="Yap V.B."/>
            <person name="Caspi A."/>
            <person name="Tesler G."/>
            <person name="Pevzner P.A."/>
            <person name="Haussler D."/>
            <person name="Roskin K.M."/>
            <person name="Baertsch R."/>
            <person name="Clawson H."/>
            <person name="Furey T.S."/>
            <person name="Hinrichs A.S."/>
            <person name="Karolchik D."/>
            <person name="Kent W.J."/>
            <person name="Rosenbloom K.R."/>
            <person name="Trumbower H."/>
            <person name="Weirauch M."/>
            <person name="Cooper D.N."/>
            <person name="Stenson P.D."/>
            <person name="Ma B."/>
            <person name="Brent M."/>
            <person name="Arumugam M."/>
            <person name="Shteynberg D."/>
            <person name="Copley R.R."/>
            <person name="Taylor M.S."/>
            <person name="Riethman H."/>
            <person name="Mudunuri U."/>
            <person name="Peterson J."/>
            <person name="Guyer M."/>
            <person name="Felsenfeld A."/>
            <person name="Old S."/>
            <person name="Mockrin S."/>
            <person name="Collins F.S."/>
        </authorList>
    </citation>
    <scope>NUCLEOTIDE SEQUENCE [LARGE SCALE GENOMIC DNA]</scope>
    <source>
        <strain>Brown Norway</strain>
    </source>
</reference>
<reference key="2">
    <citation type="journal article" date="2004" name="Eur. J. Cell Biol.">
        <title>Comprehensive analysis of keratin gene clusters in humans and rodents.</title>
        <authorList>
            <person name="Hesse M."/>
            <person name="Zimek A."/>
            <person name="Weber K."/>
            <person name="Magin T.M."/>
        </authorList>
    </citation>
    <scope>IDENTIFICATION</scope>
</reference>
<protein>
    <recommendedName>
        <fullName>Keratin, type I cytoskeletal 24</fullName>
    </recommendedName>
    <alternativeName>
        <fullName>Cytokeratin-24</fullName>
        <shortName>CK-24</shortName>
    </alternativeName>
    <alternativeName>
        <fullName>Keratin-24</fullName>
        <shortName>K24</shortName>
    </alternativeName>
    <alternativeName>
        <fullName>Type I keratin-24</fullName>
    </alternativeName>
</protein>
<proteinExistence type="inferred from homology"/>
<sequence length="491" mass="52380">MFCSAQKGSCSSRVSSSGAVGSRGCTGSGSSYGLGGGSAWGFQGSSSSWGLSGGSKGSIGGGFSSCSVRGGFGAGSSFGGGSGFGGGSSGGVSSYGGSLGGGLGGIGGYDGGLLSGSEKQTMQGLNDRLANYLDKVRALEEANTDLETKIKDWYGRHGSGKDGPGRDYSQYCSVIEDLKNQIISATCENARLALQIDNARLAADDFRMKYEHELCLRQSLEADINGLRKVLDEMTMTRCDLEMQIEGLTEELVFLRKNHEEEMKCLQGSSGGDVTVEMNATPGTDLTKLLNDMRAQYEAMAEQNRQEAEKQFNERSACLQAQISTDAGAANCAKSEVMELRRTVQTLEIELQSQLALKCSLEGTLADTEARYVAQLSGIQTQISSLEEQLSQIRGETQCQSAEYECLLDIKTRLEQEIETYRRLLNGDGGGCDYRNLVSRQVVLNDSNFGSCSGQEKDPSKTRVTKTIIEEVVDGKVVSSQVSNISEVKIK</sequence>
<accession>Q6IFX1</accession>
<comment type="subunit">
    <text>Heterotetramer of two type I and two type II keratins.</text>
</comment>
<comment type="miscellaneous">
    <text>There are two types of cytoskeletal and microfibrillar keratin, I (acidic) and II (neutral to basic) (40-55 and 56-70 kDa, respectively).</text>
</comment>
<comment type="similarity">
    <text evidence="1">Belongs to the intermediate filament family.</text>
</comment>
<dbReference type="EMBL" id="AABR03074556">
    <property type="status" value="NOT_ANNOTATED_CDS"/>
    <property type="molecule type" value="Genomic_DNA"/>
</dbReference>
<dbReference type="EMBL" id="AABR03075642">
    <property type="status" value="NOT_ANNOTATED_CDS"/>
    <property type="molecule type" value="Genomic_DNA"/>
</dbReference>
<dbReference type="EMBL" id="BK004027">
    <property type="protein sequence ID" value="DAA04461.1"/>
    <property type="molecule type" value="mRNA"/>
</dbReference>
<dbReference type="RefSeq" id="NP_001004131.1">
    <property type="nucleotide sequence ID" value="NM_001004131.2"/>
</dbReference>
<dbReference type="SMR" id="Q6IFX1"/>
<dbReference type="FunCoup" id="Q6IFX1">
    <property type="interactions" value="121"/>
</dbReference>
<dbReference type="STRING" id="10116.ENSRNOP00000014851"/>
<dbReference type="PhosphoSitePlus" id="Q6IFX1"/>
<dbReference type="jPOST" id="Q6IFX1"/>
<dbReference type="PaxDb" id="10116-ENSRNOP00000014851"/>
<dbReference type="Ensembl" id="ENSRNOT00000014851.8">
    <property type="protein sequence ID" value="ENSRNOP00000014851.6"/>
    <property type="gene ID" value="ENSRNOG00000010970.8"/>
</dbReference>
<dbReference type="GeneID" id="287675"/>
<dbReference type="KEGG" id="rno:287675"/>
<dbReference type="UCSC" id="RGD:1303157">
    <property type="organism name" value="rat"/>
</dbReference>
<dbReference type="AGR" id="RGD:1303157"/>
<dbReference type="CTD" id="192666"/>
<dbReference type="RGD" id="1303157">
    <property type="gene designation" value="Krt24"/>
</dbReference>
<dbReference type="eggNOG" id="ENOG502QTM6">
    <property type="taxonomic scope" value="Eukaryota"/>
</dbReference>
<dbReference type="GeneTree" id="ENSGT00940000161783"/>
<dbReference type="HOGENOM" id="CLU_012560_8_3_1"/>
<dbReference type="InParanoid" id="Q6IFX1"/>
<dbReference type="OMA" id="SGSTNMG"/>
<dbReference type="OrthoDB" id="2441647at2759"/>
<dbReference type="PhylomeDB" id="Q6IFX1"/>
<dbReference type="Reactome" id="R-RNO-6805567">
    <property type="pathway name" value="Keratinization"/>
</dbReference>
<dbReference type="Reactome" id="R-RNO-6809371">
    <property type="pathway name" value="Formation of the cornified envelope"/>
</dbReference>
<dbReference type="PRO" id="PR:Q6IFX1"/>
<dbReference type="Proteomes" id="UP000002494">
    <property type="component" value="Chromosome 10"/>
</dbReference>
<dbReference type="Bgee" id="ENSRNOG00000010970">
    <property type="expression patterns" value="Expressed in heart and 1 other cell type or tissue"/>
</dbReference>
<dbReference type="GO" id="GO:0005856">
    <property type="term" value="C:cytoskeleton"/>
    <property type="evidence" value="ECO:0000318"/>
    <property type="project" value="GO_Central"/>
</dbReference>
<dbReference type="GO" id="GO:0005882">
    <property type="term" value="C:intermediate filament"/>
    <property type="evidence" value="ECO:0000304"/>
    <property type="project" value="RGD"/>
</dbReference>
<dbReference type="GO" id="GO:0045095">
    <property type="term" value="C:keratin filament"/>
    <property type="evidence" value="ECO:0000304"/>
    <property type="project" value="RGD"/>
</dbReference>
<dbReference type="GO" id="GO:0005200">
    <property type="term" value="F:structural constituent of cytoskeleton"/>
    <property type="evidence" value="ECO:0000304"/>
    <property type="project" value="RGD"/>
</dbReference>
<dbReference type="GO" id="GO:0030855">
    <property type="term" value="P:epithelial cell differentiation"/>
    <property type="evidence" value="ECO:0000318"/>
    <property type="project" value="GO_Central"/>
</dbReference>
<dbReference type="GO" id="GO:0045109">
    <property type="term" value="P:intermediate filament organization"/>
    <property type="evidence" value="ECO:0000318"/>
    <property type="project" value="GO_Central"/>
</dbReference>
<dbReference type="GO" id="GO:0045103">
    <property type="term" value="P:intermediate filament-based process"/>
    <property type="evidence" value="ECO:0000304"/>
    <property type="project" value="RGD"/>
</dbReference>
<dbReference type="FunFam" id="1.20.5.1160:FF:000002">
    <property type="entry name" value="Type I keratin 10"/>
    <property type="match status" value="1"/>
</dbReference>
<dbReference type="FunFam" id="1.20.5.170:FF:000002">
    <property type="entry name" value="Type I keratin KA11"/>
    <property type="match status" value="1"/>
</dbReference>
<dbReference type="FunFam" id="1.20.5.500:FF:000001">
    <property type="entry name" value="Type II keratin 23"/>
    <property type="match status" value="1"/>
</dbReference>
<dbReference type="Gene3D" id="1.20.5.170">
    <property type="match status" value="1"/>
</dbReference>
<dbReference type="Gene3D" id="1.20.5.500">
    <property type="entry name" value="Single helix bin"/>
    <property type="match status" value="1"/>
</dbReference>
<dbReference type="Gene3D" id="1.20.5.1160">
    <property type="entry name" value="Vasodilator-stimulated phosphoprotein"/>
    <property type="match status" value="1"/>
</dbReference>
<dbReference type="InterPro" id="IPR039008">
    <property type="entry name" value="IF_rod_dom"/>
</dbReference>
<dbReference type="InterPro" id="IPR002957">
    <property type="entry name" value="Keratin_I"/>
</dbReference>
<dbReference type="PANTHER" id="PTHR23239">
    <property type="entry name" value="INTERMEDIATE FILAMENT"/>
    <property type="match status" value="1"/>
</dbReference>
<dbReference type="PANTHER" id="PTHR23239:SF207">
    <property type="entry name" value="KERATIN, TYPE I CYTOSKELETAL 24"/>
    <property type="match status" value="1"/>
</dbReference>
<dbReference type="Pfam" id="PF00038">
    <property type="entry name" value="Filament"/>
    <property type="match status" value="1"/>
</dbReference>
<dbReference type="PRINTS" id="PR01248">
    <property type="entry name" value="TYPE1KERATIN"/>
</dbReference>
<dbReference type="SMART" id="SM01391">
    <property type="entry name" value="Filament"/>
    <property type="match status" value="1"/>
</dbReference>
<dbReference type="SUPFAM" id="SSF64593">
    <property type="entry name" value="Intermediate filament protein, coiled coil region"/>
    <property type="match status" value="2"/>
</dbReference>
<dbReference type="PROSITE" id="PS51842">
    <property type="entry name" value="IF_ROD_2"/>
    <property type="match status" value="1"/>
</dbReference>
<evidence type="ECO:0000255" key="1">
    <source>
        <dbReference type="PROSITE-ProRule" id="PRU01188"/>
    </source>
</evidence>
<evidence type="ECO:0000256" key="2">
    <source>
        <dbReference type="SAM" id="MobiDB-lite"/>
    </source>
</evidence>
<organism>
    <name type="scientific">Rattus norvegicus</name>
    <name type="common">Rat</name>
    <dbReference type="NCBI Taxonomy" id="10116"/>
    <lineage>
        <taxon>Eukaryota</taxon>
        <taxon>Metazoa</taxon>
        <taxon>Chordata</taxon>
        <taxon>Craniata</taxon>
        <taxon>Vertebrata</taxon>
        <taxon>Euteleostomi</taxon>
        <taxon>Mammalia</taxon>
        <taxon>Eutheria</taxon>
        <taxon>Euarchontoglires</taxon>
        <taxon>Glires</taxon>
        <taxon>Rodentia</taxon>
        <taxon>Myomorpha</taxon>
        <taxon>Muroidea</taxon>
        <taxon>Muridae</taxon>
        <taxon>Murinae</taxon>
        <taxon>Rattus</taxon>
    </lineage>
</organism>
<name>K1C24_RAT</name>
<feature type="chain" id="PRO_0000314852" description="Keratin, type I cytoskeletal 24">
    <location>
        <begin position="1"/>
        <end position="491"/>
    </location>
</feature>
<feature type="domain" description="IF rod" evidence="1">
    <location>
        <begin position="118"/>
        <end position="432"/>
    </location>
</feature>
<feature type="region of interest" description="Head">
    <location>
        <begin position="1"/>
        <end position="117"/>
    </location>
</feature>
<feature type="region of interest" description="Disordered" evidence="2">
    <location>
        <begin position="1"/>
        <end position="23"/>
    </location>
</feature>
<feature type="region of interest" description="Coil 1A">
    <location>
        <begin position="118"/>
        <end position="153"/>
    </location>
</feature>
<feature type="region of interest" description="Linker 1">
    <location>
        <begin position="154"/>
        <end position="174"/>
    </location>
</feature>
<feature type="region of interest" description="Coil 1B">
    <location>
        <begin position="175"/>
        <end position="266"/>
    </location>
</feature>
<feature type="region of interest" description="Linker 12">
    <location>
        <begin position="267"/>
        <end position="289"/>
    </location>
</feature>
<feature type="region of interest" description="Coil 2">
    <location>
        <begin position="290"/>
        <end position="428"/>
    </location>
</feature>
<feature type="region of interest" description="Tail">
    <location>
        <begin position="429"/>
        <end position="491"/>
    </location>
</feature>
<feature type="compositionally biased region" description="Low complexity" evidence="2">
    <location>
        <begin position="8"/>
        <end position="23"/>
    </location>
</feature>
<keyword id="KW-0175">Coiled coil</keyword>
<keyword id="KW-0403">Intermediate filament</keyword>
<keyword id="KW-0416">Keratin</keyword>
<keyword id="KW-1185">Reference proteome</keyword>
<gene>
    <name type="primary">Krt24</name>
    <name type="synonym">Ka24</name>
</gene>